<feature type="chain" id="PRO_1000055388" description="Large ribosomal subunit protein uL13">
    <location>
        <begin position="1"/>
        <end position="142"/>
    </location>
</feature>
<evidence type="ECO:0000255" key="1">
    <source>
        <dbReference type="HAMAP-Rule" id="MF_01366"/>
    </source>
</evidence>
<evidence type="ECO:0000305" key="2"/>
<proteinExistence type="inferred from homology"/>
<comment type="function">
    <text evidence="1">This protein is one of the early assembly proteins of the 50S ribosomal subunit, although it is not seen to bind rRNA by itself. It is important during the early stages of 50S assembly.</text>
</comment>
<comment type="subunit">
    <text evidence="1">Part of the 50S ribosomal subunit.</text>
</comment>
<comment type="similarity">
    <text evidence="1">Belongs to the universal ribosomal protein uL13 family.</text>
</comment>
<reference key="1">
    <citation type="journal article" date="2007" name="Genome Biol.">
        <title>Characterization and modeling of the Haemophilus influenzae core and supragenomes based on the complete genomic sequences of Rd and 12 clinical nontypeable strains.</title>
        <authorList>
            <person name="Hogg J.S."/>
            <person name="Hu F.Z."/>
            <person name="Janto B."/>
            <person name="Boissy R."/>
            <person name="Hayes J."/>
            <person name="Keefe R."/>
            <person name="Post J.C."/>
            <person name="Ehrlich G.D."/>
        </authorList>
    </citation>
    <scope>NUCLEOTIDE SEQUENCE [LARGE SCALE GENOMIC DNA]</scope>
    <source>
        <strain>PittGG</strain>
    </source>
</reference>
<gene>
    <name evidence="1" type="primary">rplM</name>
    <name type="ordered locus">CGSHiGG_01100</name>
</gene>
<accession>A5UEW0</accession>
<keyword id="KW-0687">Ribonucleoprotein</keyword>
<keyword id="KW-0689">Ribosomal protein</keyword>
<organism>
    <name type="scientific">Haemophilus influenzae (strain PittGG)</name>
    <dbReference type="NCBI Taxonomy" id="374931"/>
    <lineage>
        <taxon>Bacteria</taxon>
        <taxon>Pseudomonadati</taxon>
        <taxon>Pseudomonadota</taxon>
        <taxon>Gammaproteobacteria</taxon>
        <taxon>Pasteurellales</taxon>
        <taxon>Pasteurellaceae</taxon>
        <taxon>Haemophilus</taxon>
    </lineage>
</organism>
<name>RL13_HAEIG</name>
<protein>
    <recommendedName>
        <fullName evidence="1">Large ribosomal subunit protein uL13</fullName>
    </recommendedName>
    <alternativeName>
        <fullName evidence="2">50S ribosomal protein L13</fullName>
    </alternativeName>
</protein>
<dbReference type="EMBL" id="CP000672">
    <property type="protein sequence ID" value="ABQ99315.1"/>
    <property type="molecule type" value="Genomic_DNA"/>
</dbReference>
<dbReference type="SMR" id="A5UEW0"/>
<dbReference type="KEGG" id="hiq:CGSHiGG_01100"/>
<dbReference type="HOGENOM" id="CLU_082184_2_2_6"/>
<dbReference type="Proteomes" id="UP000001990">
    <property type="component" value="Chromosome"/>
</dbReference>
<dbReference type="GO" id="GO:0022625">
    <property type="term" value="C:cytosolic large ribosomal subunit"/>
    <property type="evidence" value="ECO:0007669"/>
    <property type="project" value="TreeGrafter"/>
</dbReference>
<dbReference type="GO" id="GO:0003729">
    <property type="term" value="F:mRNA binding"/>
    <property type="evidence" value="ECO:0007669"/>
    <property type="project" value="TreeGrafter"/>
</dbReference>
<dbReference type="GO" id="GO:0003735">
    <property type="term" value="F:structural constituent of ribosome"/>
    <property type="evidence" value="ECO:0007669"/>
    <property type="project" value="InterPro"/>
</dbReference>
<dbReference type="GO" id="GO:0017148">
    <property type="term" value="P:negative regulation of translation"/>
    <property type="evidence" value="ECO:0007669"/>
    <property type="project" value="TreeGrafter"/>
</dbReference>
<dbReference type="GO" id="GO:0006412">
    <property type="term" value="P:translation"/>
    <property type="evidence" value="ECO:0007669"/>
    <property type="project" value="UniProtKB-UniRule"/>
</dbReference>
<dbReference type="CDD" id="cd00392">
    <property type="entry name" value="Ribosomal_L13"/>
    <property type="match status" value="1"/>
</dbReference>
<dbReference type="FunFam" id="3.90.1180.10:FF:000001">
    <property type="entry name" value="50S ribosomal protein L13"/>
    <property type="match status" value="1"/>
</dbReference>
<dbReference type="Gene3D" id="3.90.1180.10">
    <property type="entry name" value="Ribosomal protein L13"/>
    <property type="match status" value="1"/>
</dbReference>
<dbReference type="HAMAP" id="MF_01366">
    <property type="entry name" value="Ribosomal_uL13"/>
    <property type="match status" value="1"/>
</dbReference>
<dbReference type="InterPro" id="IPR005822">
    <property type="entry name" value="Ribosomal_uL13"/>
</dbReference>
<dbReference type="InterPro" id="IPR005823">
    <property type="entry name" value="Ribosomal_uL13_bac-type"/>
</dbReference>
<dbReference type="InterPro" id="IPR023563">
    <property type="entry name" value="Ribosomal_uL13_CS"/>
</dbReference>
<dbReference type="InterPro" id="IPR036899">
    <property type="entry name" value="Ribosomal_uL13_sf"/>
</dbReference>
<dbReference type="NCBIfam" id="TIGR01066">
    <property type="entry name" value="rplM_bact"/>
    <property type="match status" value="1"/>
</dbReference>
<dbReference type="PANTHER" id="PTHR11545:SF2">
    <property type="entry name" value="LARGE RIBOSOMAL SUBUNIT PROTEIN UL13M"/>
    <property type="match status" value="1"/>
</dbReference>
<dbReference type="PANTHER" id="PTHR11545">
    <property type="entry name" value="RIBOSOMAL PROTEIN L13"/>
    <property type="match status" value="1"/>
</dbReference>
<dbReference type="Pfam" id="PF00572">
    <property type="entry name" value="Ribosomal_L13"/>
    <property type="match status" value="1"/>
</dbReference>
<dbReference type="PIRSF" id="PIRSF002181">
    <property type="entry name" value="Ribosomal_L13"/>
    <property type="match status" value="1"/>
</dbReference>
<dbReference type="SUPFAM" id="SSF52161">
    <property type="entry name" value="Ribosomal protein L13"/>
    <property type="match status" value="1"/>
</dbReference>
<dbReference type="PROSITE" id="PS00783">
    <property type="entry name" value="RIBOSOMAL_L13"/>
    <property type="match status" value="1"/>
</dbReference>
<sequence length="142" mass="15978">MKTFVAKPETVKRDWYVVDATGKTLGRLATELARRLRGKHKAEYTPHVDTGDYIIVINADKVAVTGRKETDKLYYWHTGYVGGIKQATFKEMIARRPEAVIEIAVKGMLPKGPLGRAMFRKLKVYAGGEHQHAAQQPQVLDI</sequence>